<comment type="function">
    <text evidence="4">Interacts with numerous Rab family members, functioning as Rab effector for some, and as GTPase activator for others (PubMed:22654674). GTPase activator for rab-2 (PubMed:22654674). In association with ric-19 activates rab-2 during dense core vesicle maturation in cholinergic motoneurons (PubMed:22654674).</text>
</comment>
<comment type="subunit">
    <text evidence="4 5">Interacts with rab-19 (PubMed:22654674). Interacts with ric-19; the interaction is direct and may be required for the activation of rab-2 and dense vesicle maturation in cholinergic motoneurons (PubMed:22654674). Interacts (via RUN domain) with rund-1 (PubMed:24698274). Does not interact with unc-108 (GTP-bound form) (PubMed:22654674).</text>
</comment>
<comment type="subcellular location">
    <subcellularLocation>
        <location evidence="4">Golgi apparatus</location>
        <location evidence="4">trans-Golgi network</location>
    </subcellularLocation>
    <subcellularLocation>
        <location evidence="4">Early endosome</location>
    </subcellularLocation>
    <subcellularLocation>
        <location evidence="4">Cytoplasmic vesicle membrane</location>
        <topology evidence="4">Peripheral membrane protein</topology>
    </subcellularLocation>
    <text evidence="4">Co-localizes with ric-19 at cytoplasmic vesicle membranes in neurons.</text>
</comment>
<comment type="alternative products">
    <event type="alternative splicing"/>
    <isoform>
        <id>I2HAA0-1</id>
        <name evidence="8">a</name>
        <sequence type="displayed"/>
    </isoform>
    <isoform>
        <id>I2HAA0-2</id>
        <name evidence="9">b</name>
        <sequence type="described" ref="VSP_061542"/>
    </isoform>
</comment>
<comment type="tissue specificity">
    <text evidence="4">Expressed in neurons in the head, tail and ventral nerve cord (at protein level).</text>
</comment>
<comment type="disruption phenotype">
    <text evidence="4">RNAi-mediated knockdown results in neuronal dense core vesicle trafficking defects whereby fewer dense core vesicles are transported to axons of the dorsal nerve cord.</text>
</comment>
<comment type="similarity">
    <text evidence="6">Belongs to the RUTBC family.</text>
</comment>
<accession>I2HAA0</accession>
<accession>I2HA99</accession>
<gene>
    <name evidence="8" type="primary">tbc-8</name>
    <name evidence="8" type="ORF">C38H2.1</name>
</gene>
<reference evidence="7" key="1">
    <citation type="journal article" date="1998" name="Science">
        <title>Genome sequence of the nematode C. elegans: a platform for investigating biology.</title>
        <authorList>
            <consortium name="The C. elegans sequencing consortium"/>
        </authorList>
    </citation>
    <scope>NUCLEOTIDE SEQUENCE [LARGE SCALE GENOMIC DNA]</scope>
    <source>
        <strain evidence="7">Bristol N2</strain>
    </source>
</reference>
<reference evidence="6" key="2">
    <citation type="journal article" date="2012" name="PLoS Genet.">
        <title>TBC-8, a putative RAB-2 GAP, regulates dense core vesicle maturation in Caenorhabditis elegans.</title>
        <authorList>
            <person name="Hannemann M."/>
            <person name="Sasidharan N."/>
            <person name="Hegermann J."/>
            <person name="Kutscher L.M."/>
            <person name="Koenig S."/>
            <person name="Eimer S."/>
        </authorList>
    </citation>
    <scope>FUNCTION</scope>
    <scope>INTERACTION WITH RAB-19 AND RIC-19</scope>
    <scope>SUBCELLULAR LOCATION</scope>
    <scope>TISSUE SPECIFICITY</scope>
    <scope>DISRUPTION PHENOTYPE</scope>
    <scope>MUTAGENESIS OF ARG-707</scope>
</reference>
<reference evidence="6" key="3">
    <citation type="journal article" date="2014" name="Neuron">
        <title>Two Rab2 interactors regulate dense-core vesicle maturation.</title>
        <authorList>
            <person name="Ailion M."/>
            <person name="Hannemann M."/>
            <person name="Dalton S."/>
            <person name="Pappas A."/>
            <person name="Watanabe S."/>
            <person name="Hegermann J."/>
            <person name="Liu Q."/>
            <person name="Han H.F."/>
            <person name="Gu M."/>
            <person name="Goulding M.Q."/>
            <person name="Sasidharan N."/>
            <person name="Schuske K."/>
            <person name="Hullett P."/>
            <person name="Eimer S."/>
            <person name="Jorgensen E.M."/>
        </authorList>
    </citation>
    <scope>INTERACTION WITH RUND-1</scope>
</reference>
<evidence type="ECO:0000255" key="1">
    <source>
        <dbReference type="PROSITE-ProRule" id="PRU00163"/>
    </source>
</evidence>
<evidence type="ECO:0000255" key="2">
    <source>
        <dbReference type="PROSITE-ProRule" id="PRU00178"/>
    </source>
</evidence>
<evidence type="ECO:0000256" key="3">
    <source>
        <dbReference type="SAM" id="MobiDB-lite"/>
    </source>
</evidence>
<evidence type="ECO:0000269" key="4">
    <source>
    </source>
</evidence>
<evidence type="ECO:0000269" key="5">
    <source>
    </source>
</evidence>
<evidence type="ECO:0000305" key="6"/>
<evidence type="ECO:0000312" key="7">
    <source>
        <dbReference type="Proteomes" id="UP000001940"/>
    </source>
</evidence>
<evidence type="ECO:0000312" key="8">
    <source>
        <dbReference type="WormBase" id="C38H2.1a"/>
    </source>
</evidence>
<evidence type="ECO:0000312" key="9">
    <source>
        <dbReference type="WormBase" id="C38H2.1b"/>
    </source>
</evidence>
<protein>
    <recommendedName>
        <fullName evidence="6">Rab GTPase-activating protein tbc-8</fullName>
    </recommendedName>
    <alternativeName>
        <fullName evidence="8">TBC domain family member 8</fullName>
    </alternativeName>
</protein>
<proteinExistence type="evidence at protein level"/>
<name>TBC8_CAEEL</name>
<organism evidence="7">
    <name type="scientific">Caenorhabditis elegans</name>
    <dbReference type="NCBI Taxonomy" id="6239"/>
    <lineage>
        <taxon>Eukaryota</taxon>
        <taxon>Metazoa</taxon>
        <taxon>Ecdysozoa</taxon>
        <taxon>Nematoda</taxon>
        <taxon>Chromadorea</taxon>
        <taxon>Rhabditida</taxon>
        <taxon>Rhabditina</taxon>
        <taxon>Rhabditomorpha</taxon>
        <taxon>Rhabditoidea</taxon>
        <taxon>Rhabditidae</taxon>
        <taxon>Peloderinae</taxon>
        <taxon>Caenorhabditis</taxon>
    </lineage>
</organism>
<feature type="chain" id="PRO_0000456037" description="Rab GTPase-activating protein tbc-8">
    <location>
        <begin position="1"/>
        <end position="913"/>
    </location>
</feature>
<feature type="domain" description="RUN" evidence="2">
    <location>
        <begin position="106"/>
        <end position="240"/>
    </location>
</feature>
<feature type="domain" description="Rab-GAP TBC" evidence="1">
    <location>
        <begin position="597"/>
        <end position="844"/>
    </location>
</feature>
<feature type="region of interest" description="Disordered" evidence="3">
    <location>
        <begin position="1"/>
        <end position="24"/>
    </location>
</feature>
<feature type="splice variant" id="VSP_061542" description="In isoform b." evidence="6">
    <location>
        <begin position="1"/>
        <end position="228"/>
    </location>
</feature>
<feature type="mutagenesis site" description="Interacts with unc-108 (GTP-bound form). Disrupts dense vesicle maturation in cholinergic motoneurons." evidence="4">
    <original>R</original>
    <variation>A</variation>
    <location>
        <position position="707"/>
    </location>
</feature>
<keyword id="KW-0025">Alternative splicing</keyword>
<keyword id="KW-0968">Cytoplasmic vesicle</keyword>
<keyword id="KW-0967">Endosome</keyword>
<keyword id="KW-0333">Golgi apparatus</keyword>
<keyword id="KW-0343">GTPase activation</keyword>
<keyword id="KW-0472">Membrane</keyword>
<keyword id="KW-1185">Reference proteome</keyword>
<sequence length="913" mass="105248">MQMFRHSSADMWRAKKPTLERRSTDGRRSSIVDWINGLSDNNNYKSDHWVEKHDEGCERMTRNGSVCAVEESEPDVPTQHREVLLTKLKIEIKNIMAEHGAKKYLNLNSPYVTSLCIAVDACIMDGLRRRLLTLFNSPSSMSLLQIIAKSNGPAQQVLDQTREIEELRTSAIPVHLIWIREALYLKSLSTIINHFIDSKSVRRYYDNSALLLDPVKGRLVATLMMAPCMVTYRRMSNRIEQEATAEELVEGATRGSTSTVPSRPPLSITRQVSSIAASVERNGSVSRDYVFSLHHSCKSTLLYGKNNVCVAMNGSDFAKGYMSLQKFYDGNLSLKWVPNQLMHASSQPSSGHSNNGEFTNIWKNTINIEMQDIIYIHLHQKDEISPTCLTFVNCEGVQSAPFQLPAGQHSIAFLSSLETGLAPLLRLDPPLWVGTTKEKILPRLRKRSTAVANPAMLDYVFRLVRTSGVEPAPEDIEDPLAPTSHSPPIHDNCVSLPNSPYIVDNVDSIVNFQIGTACQSMRNQIMARAFYGWLTYVRHLRTIRTHLLHLVDTKTLICDDDCDPVDEKFWKQARAEPTEENEKEFLKRVYWRGIEGINTKEVRRMAWPYLLGLFEWNESPESRLEQFTSQYWQDIEEWRVLEAEVRRRDEEAFRAARARKAASPVREESCDVFEDPNEPTCSQHYDRENLITLFRANLHRIDKDVERCDRNLMFFSNKDNLESLRRVMYTYVRRNLEEGYTQGMCDLLAPLLVTFEDEALTLECFSLLMLRQRGKFPQRPGMSKCLLNLRSLIQVVDPQIYALISDIDYAQALSFAFRWFLLDFKRELSYECTYKVWEVIWAAQRLRITDDFAIFFGLATITNYHDVLITNNFDYTDMIKFFNEMAERHDCSRLLSSARTHVKCLQNLVQHLK</sequence>
<dbReference type="EMBL" id="BX284603">
    <property type="protein sequence ID" value="CCH63806.1"/>
    <property type="molecule type" value="Genomic_DNA"/>
</dbReference>
<dbReference type="EMBL" id="BX284603">
    <property type="protein sequence ID" value="CCH63807.1"/>
    <property type="molecule type" value="Genomic_DNA"/>
</dbReference>
<dbReference type="RefSeq" id="NP_001255072.1">
    <molecule id="I2HAA0-1"/>
    <property type="nucleotide sequence ID" value="NM_001268143.4"/>
</dbReference>
<dbReference type="RefSeq" id="NP_001255073.1">
    <molecule id="I2HAA0-2"/>
    <property type="nucleotide sequence ID" value="NM_001268144.3"/>
</dbReference>
<dbReference type="SMR" id="I2HAA0"/>
<dbReference type="FunCoup" id="I2HAA0">
    <property type="interactions" value="502"/>
</dbReference>
<dbReference type="STRING" id="6239.C38H2.1a.1"/>
<dbReference type="PaxDb" id="6239-C38H2.1a"/>
<dbReference type="EnsemblMetazoa" id="C38H2.1a.1">
    <molecule id="I2HAA0-1"/>
    <property type="protein sequence ID" value="C38H2.1a.1"/>
    <property type="gene ID" value="WBGene00008018"/>
</dbReference>
<dbReference type="EnsemblMetazoa" id="C38H2.1b.1">
    <molecule id="I2HAA0-2"/>
    <property type="protein sequence ID" value="C38H2.1b.1"/>
    <property type="gene ID" value="WBGene00008018"/>
</dbReference>
<dbReference type="GeneID" id="176454"/>
<dbReference type="KEGG" id="cel:CELE_C38H2.1"/>
<dbReference type="AGR" id="WB:WBGene00008018"/>
<dbReference type="CTD" id="176454"/>
<dbReference type="WormBase" id="C38H2.1a">
    <molecule id="I2HAA0-1"/>
    <property type="protein sequence ID" value="CE47567"/>
    <property type="gene ID" value="WBGene00008018"/>
    <property type="gene designation" value="tbc-8"/>
</dbReference>
<dbReference type="WormBase" id="C38H2.1b">
    <molecule id="I2HAA0-2"/>
    <property type="protein sequence ID" value="CE47487"/>
    <property type="gene ID" value="WBGene00008018"/>
    <property type="gene designation" value="tbc-8"/>
</dbReference>
<dbReference type="eggNOG" id="KOG1648">
    <property type="taxonomic scope" value="Eukaryota"/>
</dbReference>
<dbReference type="GeneTree" id="ENSGT00940000168017"/>
<dbReference type="HOGENOM" id="CLU_006235_0_0_1"/>
<dbReference type="InParanoid" id="I2HAA0"/>
<dbReference type="OMA" id="LWPKSMR"/>
<dbReference type="OrthoDB" id="10264062at2759"/>
<dbReference type="PhylomeDB" id="I2HAA0"/>
<dbReference type="PRO" id="PR:I2HAA0"/>
<dbReference type="Proteomes" id="UP000001940">
    <property type="component" value="Chromosome III"/>
</dbReference>
<dbReference type="Bgee" id="WBGene00008018">
    <property type="expression patterns" value="Expressed in larva and 3 other cell types or tissues"/>
</dbReference>
<dbReference type="ExpressionAtlas" id="I2HAA0">
    <property type="expression patterns" value="baseline and differential"/>
</dbReference>
<dbReference type="GO" id="GO:0030659">
    <property type="term" value="C:cytoplasmic vesicle membrane"/>
    <property type="evidence" value="ECO:0007669"/>
    <property type="project" value="UniProtKB-SubCell"/>
</dbReference>
<dbReference type="GO" id="GO:0005829">
    <property type="term" value="C:cytosol"/>
    <property type="evidence" value="ECO:0000314"/>
    <property type="project" value="WormBase"/>
</dbReference>
<dbReference type="GO" id="GO:0005769">
    <property type="term" value="C:early endosome"/>
    <property type="evidence" value="ECO:0000314"/>
    <property type="project" value="WormBase"/>
</dbReference>
<dbReference type="GO" id="GO:0005797">
    <property type="term" value="C:Golgi medial cisterna"/>
    <property type="evidence" value="ECO:0000314"/>
    <property type="project" value="WormBase"/>
</dbReference>
<dbReference type="GO" id="GO:0000138">
    <property type="term" value="C:Golgi trans cisterna"/>
    <property type="evidence" value="ECO:0000314"/>
    <property type="project" value="WormBase"/>
</dbReference>
<dbReference type="GO" id="GO:0005096">
    <property type="term" value="F:GTPase activator activity"/>
    <property type="evidence" value="ECO:0000318"/>
    <property type="project" value="GO_Central"/>
</dbReference>
<dbReference type="GO" id="GO:0031267">
    <property type="term" value="F:small GTPase binding"/>
    <property type="evidence" value="ECO:0000353"/>
    <property type="project" value="WormBase"/>
</dbReference>
<dbReference type="GO" id="GO:1990502">
    <property type="term" value="P:dense core granule maturation"/>
    <property type="evidence" value="ECO:0000315"/>
    <property type="project" value="WormBase"/>
</dbReference>
<dbReference type="CDD" id="cd15784">
    <property type="entry name" value="PH_RUTBC"/>
    <property type="match status" value="1"/>
</dbReference>
<dbReference type="FunFam" id="1.10.472.80:FF:000114">
    <property type="entry name" value="TBC (Tre-2/Bub2/Cdc16) domain family"/>
    <property type="match status" value="1"/>
</dbReference>
<dbReference type="FunFam" id="1.10.8.270:FF:000060">
    <property type="entry name" value="TBC (Tre-2/Bub2/Cdc16) domain family"/>
    <property type="match status" value="1"/>
</dbReference>
<dbReference type="FunFam" id="2.30.29.230:FF:000006">
    <property type="entry name" value="TBC (Tre-2/Bub2/Cdc16) domain family"/>
    <property type="match status" value="1"/>
</dbReference>
<dbReference type="Gene3D" id="1.20.58.900">
    <property type="match status" value="1"/>
</dbReference>
<dbReference type="Gene3D" id="2.30.29.230">
    <property type="match status" value="1"/>
</dbReference>
<dbReference type="Gene3D" id="1.10.8.270">
    <property type="entry name" value="putative rabgap domain of human tbc1 domain family member 14 like domains"/>
    <property type="match status" value="1"/>
</dbReference>
<dbReference type="Gene3D" id="1.10.472.80">
    <property type="entry name" value="Ypt/Rab-GAP domain of gyp1p, domain 3"/>
    <property type="match status" value="1"/>
</dbReference>
<dbReference type="InterPro" id="IPR000195">
    <property type="entry name" value="Rab-GAP-TBC_dom"/>
</dbReference>
<dbReference type="InterPro" id="IPR035969">
    <property type="entry name" value="Rab-GAP_TBC_sf"/>
</dbReference>
<dbReference type="InterPro" id="IPR004012">
    <property type="entry name" value="Run_dom"/>
</dbReference>
<dbReference type="InterPro" id="IPR037213">
    <property type="entry name" value="Run_dom_sf"/>
</dbReference>
<dbReference type="InterPro" id="IPR037745">
    <property type="entry name" value="SGSM1/2"/>
</dbReference>
<dbReference type="InterPro" id="IPR021935">
    <property type="entry name" value="SGSM1/2_RBD"/>
</dbReference>
<dbReference type="PANTHER" id="PTHR22957:SF502">
    <property type="entry name" value="SMALL G PROTEIN SIGNALING MODULATOR 2-RELATED"/>
    <property type="match status" value="1"/>
</dbReference>
<dbReference type="PANTHER" id="PTHR22957">
    <property type="entry name" value="TBC1 DOMAIN FAMILY MEMBER GTPASE-ACTIVATING PROTEIN"/>
    <property type="match status" value="1"/>
</dbReference>
<dbReference type="Pfam" id="PF12068">
    <property type="entry name" value="PH_RBD"/>
    <property type="match status" value="1"/>
</dbReference>
<dbReference type="Pfam" id="PF00566">
    <property type="entry name" value="RabGAP-TBC"/>
    <property type="match status" value="1"/>
</dbReference>
<dbReference type="Pfam" id="PF02759">
    <property type="entry name" value="RUN"/>
    <property type="match status" value="1"/>
</dbReference>
<dbReference type="SMART" id="SM00593">
    <property type="entry name" value="RUN"/>
    <property type="match status" value="1"/>
</dbReference>
<dbReference type="SMART" id="SM00164">
    <property type="entry name" value="TBC"/>
    <property type="match status" value="1"/>
</dbReference>
<dbReference type="SUPFAM" id="SSF140741">
    <property type="entry name" value="RUN domain-like"/>
    <property type="match status" value="1"/>
</dbReference>
<dbReference type="SUPFAM" id="SSF47923">
    <property type="entry name" value="Ypt/Rab-GAP domain of gyp1p"/>
    <property type="match status" value="2"/>
</dbReference>
<dbReference type="PROSITE" id="PS50826">
    <property type="entry name" value="RUN"/>
    <property type="match status" value="1"/>
</dbReference>
<dbReference type="PROSITE" id="PS50086">
    <property type="entry name" value="TBC_RABGAP"/>
    <property type="match status" value="1"/>
</dbReference>